<comment type="function">
    <text evidence="1">Allows the formation of correctly charged Asn-tRNA(Asn) or Gln-tRNA(Gln) through the transamidation of misacylated Asp-tRNA(Asn) or Glu-tRNA(Gln) in organisms which lack either or both of asparaginyl-tRNA or glutaminyl-tRNA synthetases. The reaction takes place in the presence of glutamine and ATP through an activated phospho-Asp-tRNA(Asn) or phospho-Glu-tRNA(Gln).</text>
</comment>
<comment type="catalytic activity">
    <reaction evidence="1">
        <text>L-glutamyl-tRNA(Gln) + L-glutamine + ATP + H2O = L-glutaminyl-tRNA(Gln) + L-glutamate + ADP + phosphate + H(+)</text>
        <dbReference type="Rhea" id="RHEA:17521"/>
        <dbReference type="Rhea" id="RHEA-COMP:9681"/>
        <dbReference type="Rhea" id="RHEA-COMP:9684"/>
        <dbReference type="ChEBI" id="CHEBI:15377"/>
        <dbReference type="ChEBI" id="CHEBI:15378"/>
        <dbReference type="ChEBI" id="CHEBI:29985"/>
        <dbReference type="ChEBI" id="CHEBI:30616"/>
        <dbReference type="ChEBI" id="CHEBI:43474"/>
        <dbReference type="ChEBI" id="CHEBI:58359"/>
        <dbReference type="ChEBI" id="CHEBI:78520"/>
        <dbReference type="ChEBI" id="CHEBI:78521"/>
        <dbReference type="ChEBI" id="CHEBI:456216"/>
    </reaction>
</comment>
<comment type="catalytic activity">
    <reaction evidence="1">
        <text>L-aspartyl-tRNA(Asn) + L-glutamine + ATP + H2O = L-asparaginyl-tRNA(Asn) + L-glutamate + ADP + phosphate + 2 H(+)</text>
        <dbReference type="Rhea" id="RHEA:14513"/>
        <dbReference type="Rhea" id="RHEA-COMP:9674"/>
        <dbReference type="Rhea" id="RHEA-COMP:9677"/>
        <dbReference type="ChEBI" id="CHEBI:15377"/>
        <dbReference type="ChEBI" id="CHEBI:15378"/>
        <dbReference type="ChEBI" id="CHEBI:29985"/>
        <dbReference type="ChEBI" id="CHEBI:30616"/>
        <dbReference type="ChEBI" id="CHEBI:43474"/>
        <dbReference type="ChEBI" id="CHEBI:58359"/>
        <dbReference type="ChEBI" id="CHEBI:78515"/>
        <dbReference type="ChEBI" id="CHEBI:78516"/>
        <dbReference type="ChEBI" id="CHEBI:456216"/>
    </reaction>
</comment>
<comment type="subunit">
    <text evidence="1">Heterotrimer of A, B and C subunits.</text>
</comment>
<comment type="similarity">
    <text evidence="1">Belongs to the GatB/GatE family. GatB subfamily.</text>
</comment>
<organism>
    <name type="scientific">Mycobacterium avium (strain 104)</name>
    <dbReference type="NCBI Taxonomy" id="243243"/>
    <lineage>
        <taxon>Bacteria</taxon>
        <taxon>Bacillati</taxon>
        <taxon>Actinomycetota</taxon>
        <taxon>Actinomycetes</taxon>
        <taxon>Mycobacteriales</taxon>
        <taxon>Mycobacteriaceae</taxon>
        <taxon>Mycobacterium</taxon>
        <taxon>Mycobacterium avium complex (MAC)</taxon>
    </lineage>
</organism>
<dbReference type="EC" id="6.3.5.-" evidence="1"/>
<dbReference type="EMBL" id="CP000479">
    <property type="protein sequence ID" value="ABK67704.1"/>
    <property type="molecule type" value="Genomic_DNA"/>
</dbReference>
<dbReference type="RefSeq" id="WP_003874999.1">
    <property type="nucleotide sequence ID" value="NC_008595.1"/>
</dbReference>
<dbReference type="SMR" id="A0QJD1"/>
<dbReference type="KEGG" id="mav:MAV_3856"/>
<dbReference type="HOGENOM" id="CLU_019240_0_0_11"/>
<dbReference type="Proteomes" id="UP000001574">
    <property type="component" value="Chromosome"/>
</dbReference>
<dbReference type="GO" id="GO:0050566">
    <property type="term" value="F:asparaginyl-tRNA synthase (glutamine-hydrolyzing) activity"/>
    <property type="evidence" value="ECO:0007669"/>
    <property type="project" value="RHEA"/>
</dbReference>
<dbReference type="GO" id="GO:0005524">
    <property type="term" value="F:ATP binding"/>
    <property type="evidence" value="ECO:0007669"/>
    <property type="project" value="UniProtKB-KW"/>
</dbReference>
<dbReference type="GO" id="GO:0050567">
    <property type="term" value="F:glutaminyl-tRNA synthase (glutamine-hydrolyzing) activity"/>
    <property type="evidence" value="ECO:0007669"/>
    <property type="project" value="UniProtKB-UniRule"/>
</dbReference>
<dbReference type="GO" id="GO:0070681">
    <property type="term" value="P:glutaminyl-tRNAGln biosynthesis via transamidation"/>
    <property type="evidence" value="ECO:0007669"/>
    <property type="project" value="TreeGrafter"/>
</dbReference>
<dbReference type="GO" id="GO:0006412">
    <property type="term" value="P:translation"/>
    <property type="evidence" value="ECO:0007669"/>
    <property type="project" value="UniProtKB-UniRule"/>
</dbReference>
<dbReference type="FunFam" id="1.10.10.410:FF:000002">
    <property type="entry name" value="Aspartyl/glutamyl-tRNA(Asn/Gln) amidotransferase subunit B"/>
    <property type="match status" value="1"/>
</dbReference>
<dbReference type="Gene3D" id="1.10.10.410">
    <property type="match status" value="1"/>
</dbReference>
<dbReference type="HAMAP" id="MF_00121">
    <property type="entry name" value="GatB"/>
    <property type="match status" value="1"/>
</dbReference>
<dbReference type="InterPro" id="IPR017959">
    <property type="entry name" value="Asn/Gln-tRNA_amidoTrfase_suB/E"/>
</dbReference>
<dbReference type="InterPro" id="IPR006075">
    <property type="entry name" value="Asn/Gln-tRNA_Trfase_suB/E_cat"/>
</dbReference>
<dbReference type="InterPro" id="IPR018027">
    <property type="entry name" value="Asn/Gln_amidotransferase"/>
</dbReference>
<dbReference type="InterPro" id="IPR003789">
    <property type="entry name" value="Asn/Gln_tRNA_amidoTrase-B-like"/>
</dbReference>
<dbReference type="InterPro" id="IPR004413">
    <property type="entry name" value="GatB"/>
</dbReference>
<dbReference type="InterPro" id="IPR023168">
    <property type="entry name" value="GatB_Yqey_C_2"/>
</dbReference>
<dbReference type="InterPro" id="IPR017958">
    <property type="entry name" value="Gln-tRNA_amidoTrfase_suB_CS"/>
</dbReference>
<dbReference type="InterPro" id="IPR014746">
    <property type="entry name" value="Gln_synth/guanido_kin_cat_dom"/>
</dbReference>
<dbReference type="NCBIfam" id="TIGR00133">
    <property type="entry name" value="gatB"/>
    <property type="match status" value="1"/>
</dbReference>
<dbReference type="NCBIfam" id="NF004012">
    <property type="entry name" value="PRK05477.1-2"/>
    <property type="match status" value="1"/>
</dbReference>
<dbReference type="NCBIfam" id="NF004013">
    <property type="entry name" value="PRK05477.1-3"/>
    <property type="match status" value="1"/>
</dbReference>
<dbReference type="NCBIfam" id="NF004014">
    <property type="entry name" value="PRK05477.1-4"/>
    <property type="match status" value="1"/>
</dbReference>
<dbReference type="PANTHER" id="PTHR11659">
    <property type="entry name" value="GLUTAMYL-TRNA GLN AMIDOTRANSFERASE SUBUNIT B MITOCHONDRIAL AND PROKARYOTIC PET112-RELATED"/>
    <property type="match status" value="1"/>
</dbReference>
<dbReference type="PANTHER" id="PTHR11659:SF0">
    <property type="entry name" value="GLUTAMYL-TRNA(GLN) AMIDOTRANSFERASE SUBUNIT B, MITOCHONDRIAL"/>
    <property type="match status" value="1"/>
</dbReference>
<dbReference type="Pfam" id="PF02934">
    <property type="entry name" value="GatB_N"/>
    <property type="match status" value="1"/>
</dbReference>
<dbReference type="Pfam" id="PF02637">
    <property type="entry name" value="GatB_Yqey"/>
    <property type="match status" value="1"/>
</dbReference>
<dbReference type="SMART" id="SM00845">
    <property type="entry name" value="GatB_Yqey"/>
    <property type="match status" value="1"/>
</dbReference>
<dbReference type="SUPFAM" id="SSF89095">
    <property type="entry name" value="GatB/YqeY motif"/>
    <property type="match status" value="1"/>
</dbReference>
<dbReference type="SUPFAM" id="SSF55931">
    <property type="entry name" value="Glutamine synthetase/guanido kinase"/>
    <property type="match status" value="1"/>
</dbReference>
<dbReference type="PROSITE" id="PS01234">
    <property type="entry name" value="GATB"/>
    <property type="match status" value="1"/>
</dbReference>
<protein>
    <recommendedName>
        <fullName evidence="1">Aspartyl/glutamyl-tRNA(Asn/Gln) amidotransferase subunit B</fullName>
        <shortName evidence="1">Asp/Glu-ADT subunit B</shortName>
        <ecNumber evidence="1">6.3.5.-</ecNumber>
    </recommendedName>
</protein>
<proteinExistence type="inferred from homology"/>
<keyword id="KW-0067">ATP-binding</keyword>
<keyword id="KW-0436">Ligase</keyword>
<keyword id="KW-0547">Nucleotide-binding</keyword>
<keyword id="KW-0648">Protein biosynthesis</keyword>
<gene>
    <name evidence="1" type="primary">gatB</name>
    <name type="ordered locus">MAV_3856</name>
</gene>
<sequence>MSVAANAELMDYDDVIARFDPVLGLEVHVELSTVTKMFCGCTTAFGAEPNTQVCPVCLGLPGSLPVLNQAAVESAIRIGLALNCEIVPWCRFARKNYFYPDMPKNYQISQYDEPIAINGYLEAPLDDGTTWRVDIERAHMEEDTGKLTHIGSETGRIHGATTSLIDYNRAGVPLIEIVTKPIVGAGERAPQIARAYVTALRDLLRALGVSDVRMDQGSMRCDANVSLKPIGTAEFGTRTETKNVNSLKSVEVAVRYEMQRQAAVLASGGRITQETRHFHEAGYTSPGRVKETAEDYRYFPEPDLEPVAPSRELVERLRLTIPELPWLSRKRIQQEWGVSDEVMRDLVNAGAVDLVIETVKHGAPSEQARAWWGNFLVQKANEANIGLDELNISPAQVAAVIALVDEGKLSNKLARQVVEGVLAGEGEPDQVMNARGLELVRDDSVTQAAVDEALAANPDVAEKIRGGKIAAAGAIVGAVMKATRGQADAARVRELVLAACGQG</sequence>
<reference key="1">
    <citation type="submission" date="2006-10" db="EMBL/GenBank/DDBJ databases">
        <authorList>
            <person name="Fleischmann R.D."/>
            <person name="Dodson R.J."/>
            <person name="Haft D.H."/>
            <person name="Merkel J.S."/>
            <person name="Nelson W.C."/>
            <person name="Fraser C.M."/>
        </authorList>
    </citation>
    <scope>NUCLEOTIDE SEQUENCE [LARGE SCALE GENOMIC DNA]</scope>
    <source>
        <strain>104</strain>
    </source>
</reference>
<accession>A0QJD1</accession>
<feature type="chain" id="PRO_1000015999" description="Aspartyl/glutamyl-tRNA(Asn/Gln) amidotransferase subunit B">
    <location>
        <begin position="1"/>
        <end position="503"/>
    </location>
</feature>
<evidence type="ECO:0000255" key="1">
    <source>
        <dbReference type="HAMAP-Rule" id="MF_00121"/>
    </source>
</evidence>
<name>GATB_MYCA1</name>